<organism>
    <name type="scientific">Deinococcus radiodurans (strain ATCC 13939 / DSM 20539 / JCM 16871 / CCUG 27074 / LMG 4051 / NBRC 15346 / NCIMB 9279 / VKM B-1422 / R1)</name>
    <dbReference type="NCBI Taxonomy" id="243230"/>
    <lineage>
        <taxon>Bacteria</taxon>
        <taxon>Thermotogati</taxon>
        <taxon>Deinococcota</taxon>
        <taxon>Deinococci</taxon>
        <taxon>Deinococcales</taxon>
        <taxon>Deinococcaceae</taxon>
        <taxon>Deinococcus</taxon>
    </lineage>
</organism>
<name>Y1986_DEIRA</name>
<reference key="1">
    <citation type="journal article" date="1999" name="Science">
        <title>Genome sequence of the radioresistant bacterium Deinococcus radiodurans R1.</title>
        <authorList>
            <person name="White O."/>
            <person name="Eisen J.A."/>
            <person name="Heidelberg J.F."/>
            <person name="Hickey E.K."/>
            <person name="Peterson J.D."/>
            <person name="Dodson R.J."/>
            <person name="Haft D.H."/>
            <person name="Gwinn M.L."/>
            <person name="Nelson W.C."/>
            <person name="Richardson D.L."/>
            <person name="Moffat K.S."/>
            <person name="Qin H."/>
            <person name="Jiang L."/>
            <person name="Pamphile W."/>
            <person name="Crosby M."/>
            <person name="Shen M."/>
            <person name="Vamathevan J.J."/>
            <person name="Lam P."/>
            <person name="McDonald L.A."/>
            <person name="Utterback T.R."/>
            <person name="Zalewski C."/>
            <person name="Makarova K.S."/>
            <person name="Aravind L."/>
            <person name="Daly M.J."/>
            <person name="Minton K.W."/>
            <person name="Fleischmann R.D."/>
            <person name="Ketchum K.A."/>
            <person name="Nelson K.E."/>
            <person name="Salzberg S.L."/>
            <person name="Smith H.O."/>
            <person name="Venter J.C."/>
            <person name="Fraser C.M."/>
        </authorList>
    </citation>
    <scope>NUCLEOTIDE SEQUENCE [LARGE SCALE GENOMIC DNA]</scope>
    <source>
        <strain>ATCC 13939 / DSM 20539 / JCM 16871 / CCUG 27074 / LMG 4051 / NBRC 15346 / NCIMB 9279 / VKM B-1422 / R1</strain>
    </source>
</reference>
<keyword id="KW-0446">Lipid-binding</keyword>
<keyword id="KW-1185">Reference proteome</keyword>
<evidence type="ECO:0000250" key="1"/>
<evidence type="ECO:0000250" key="2">
    <source>
        <dbReference type="UniProtKB" id="Q9X1H9"/>
    </source>
</evidence>
<evidence type="ECO:0000255" key="3">
    <source>
        <dbReference type="PROSITE-ProRule" id="PRU00815"/>
    </source>
</evidence>
<feature type="chain" id="PRO_0000209764" description="DegV domain-containing protein DR_1986">
    <location>
        <begin position="1"/>
        <end position="281"/>
    </location>
</feature>
<feature type="domain" description="DegV" evidence="3">
    <location>
        <begin position="3"/>
        <end position="278"/>
    </location>
</feature>
<feature type="binding site" evidence="2">
    <location>
        <position position="61"/>
    </location>
    <ligand>
        <name>hexadecanoate</name>
        <dbReference type="ChEBI" id="CHEBI:7896"/>
    </ligand>
</feature>
<feature type="binding site" evidence="2">
    <location>
        <position position="93"/>
    </location>
    <ligand>
        <name>hexadecanoate</name>
        <dbReference type="ChEBI" id="CHEBI:7896"/>
    </ligand>
</feature>
<dbReference type="EMBL" id="AE000513">
    <property type="protein sequence ID" value="AAF11538.1"/>
    <property type="molecule type" value="Genomic_DNA"/>
</dbReference>
<dbReference type="PIR" id="E75330">
    <property type="entry name" value="E75330"/>
</dbReference>
<dbReference type="RefSeq" id="NP_295709.1">
    <property type="nucleotide sequence ID" value="NC_001263.1"/>
</dbReference>
<dbReference type="RefSeq" id="WP_010888619.1">
    <property type="nucleotide sequence ID" value="NC_001263.1"/>
</dbReference>
<dbReference type="SMR" id="Q9RSY3"/>
<dbReference type="FunCoup" id="Q9RSY3">
    <property type="interactions" value="2"/>
</dbReference>
<dbReference type="STRING" id="243230.DR_1986"/>
<dbReference type="PaxDb" id="243230-DR_1986"/>
<dbReference type="EnsemblBacteria" id="AAF11538">
    <property type="protein sequence ID" value="AAF11538"/>
    <property type="gene ID" value="DR_1986"/>
</dbReference>
<dbReference type="GeneID" id="69518223"/>
<dbReference type="KEGG" id="dra:DR_1986"/>
<dbReference type="PATRIC" id="fig|243230.17.peg.2209"/>
<dbReference type="eggNOG" id="COG1307">
    <property type="taxonomic scope" value="Bacteria"/>
</dbReference>
<dbReference type="HOGENOM" id="CLU_048251_0_1_0"/>
<dbReference type="InParanoid" id="Q9RSY3"/>
<dbReference type="OrthoDB" id="9780660at2"/>
<dbReference type="Proteomes" id="UP000002524">
    <property type="component" value="Chromosome 1"/>
</dbReference>
<dbReference type="GO" id="GO:0008289">
    <property type="term" value="F:lipid binding"/>
    <property type="evidence" value="ECO:0007669"/>
    <property type="project" value="UniProtKB-KW"/>
</dbReference>
<dbReference type="Gene3D" id="3.30.1180.10">
    <property type="match status" value="1"/>
</dbReference>
<dbReference type="Gene3D" id="3.40.50.10170">
    <property type="match status" value="1"/>
</dbReference>
<dbReference type="InterPro" id="IPR003797">
    <property type="entry name" value="DegV"/>
</dbReference>
<dbReference type="InterPro" id="IPR043168">
    <property type="entry name" value="DegV_C"/>
</dbReference>
<dbReference type="InterPro" id="IPR050270">
    <property type="entry name" value="DegV_domain_contain"/>
</dbReference>
<dbReference type="NCBIfam" id="TIGR00762">
    <property type="entry name" value="DegV"/>
    <property type="match status" value="1"/>
</dbReference>
<dbReference type="PANTHER" id="PTHR33434">
    <property type="entry name" value="DEGV DOMAIN-CONTAINING PROTEIN DR_1986-RELATED"/>
    <property type="match status" value="1"/>
</dbReference>
<dbReference type="PANTHER" id="PTHR33434:SF2">
    <property type="entry name" value="FATTY ACID-BINDING PROTEIN TM_1468"/>
    <property type="match status" value="1"/>
</dbReference>
<dbReference type="Pfam" id="PF02645">
    <property type="entry name" value="DegV"/>
    <property type="match status" value="1"/>
</dbReference>
<dbReference type="SUPFAM" id="SSF82549">
    <property type="entry name" value="DAK1/DegV-like"/>
    <property type="match status" value="1"/>
</dbReference>
<dbReference type="PROSITE" id="PS51482">
    <property type="entry name" value="DEGV"/>
    <property type="match status" value="1"/>
</dbReference>
<protein>
    <recommendedName>
        <fullName>DegV domain-containing protein DR_1986</fullName>
    </recommendedName>
</protein>
<proteinExistence type="inferred from homology"/>
<comment type="function">
    <text evidence="1">May bind long-chain fatty acids, such as palmitate, and may play a role in lipid transport or fatty acid metabolism.</text>
</comment>
<sequence>MSIAIVTDSTSDLTPEHLAALGVTGVPLYVLFEGQLYQDGVQLSARQLVEGVRAGKAIPSTSQPSPAEFAQAYAQALEHADEVLSLHISGQLSGTVGSARLAAQEFGGRVTVVDTHTVTLGLGLQVLRAAELVRAGQSVPQIVQTLERVYPQADLRFTVDTLDFLRLNGRIGGASALLGGLLNIKPLLVVRGGRVDAGGRVRGQKKALADLAEHVRRYVSQHGGARVAFLATVGGEEDRAAVRAQLSDLHFQDMGDHEIGAVVTVHAGPGAVGVALEPLSA</sequence>
<gene>
    <name type="ordered locus">DR_1986</name>
</gene>
<accession>Q9RSY3</accession>